<evidence type="ECO:0000255" key="1">
    <source>
        <dbReference type="HAMAP-Rule" id="MF_00374"/>
    </source>
</evidence>
<evidence type="ECO:0000305" key="2"/>
<comment type="similarity">
    <text evidence="1">Belongs to the universal ribosomal protein uL29 family.</text>
</comment>
<keyword id="KW-1185">Reference proteome</keyword>
<keyword id="KW-0687">Ribonucleoprotein</keyword>
<keyword id="KW-0689">Ribosomal protein</keyword>
<name>RL29_NEIG1</name>
<accession>Q5F5T5</accession>
<protein>
    <recommendedName>
        <fullName evidence="1">Large ribosomal subunit protein uL29</fullName>
    </recommendedName>
    <alternativeName>
        <fullName evidence="2">50S ribosomal protein L29</fullName>
    </alternativeName>
</protein>
<dbReference type="EMBL" id="AE004969">
    <property type="protein sequence ID" value="AAW90452.1"/>
    <property type="molecule type" value="Genomic_DNA"/>
</dbReference>
<dbReference type="RefSeq" id="WP_002215432.1">
    <property type="nucleotide sequence ID" value="NC_002946.2"/>
</dbReference>
<dbReference type="RefSeq" id="YP_208864.1">
    <property type="nucleotide sequence ID" value="NC_002946.2"/>
</dbReference>
<dbReference type="SMR" id="Q5F5T5"/>
<dbReference type="STRING" id="242231.NGO_1831"/>
<dbReference type="GeneID" id="93387225"/>
<dbReference type="KEGG" id="ngo:NGO_1831"/>
<dbReference type="PATRIC" id="fig|242231.10.peg.2201"/>
<dbReference type="HOGENOM" id="CLU_158491_1_2_4"/>
<dbReference type="Proteomes" id="UP000000535">
    <property type="component" value="Chromosome"/>
</dbReference>
<dbReference type="GO" id="GO:0022625">
    <property type="term" value="C:cytosolic large ribosomal subunit"/>
    <property type="evidence" value="ECO:0007669"/>
    <property type="project" value="TreeGrafter"/>
</dbReference>
<dbReference type="GO" id="GO:0003735">
    <property type="term" value="F:structural constituent of ribosome"/>
    <property type="evidence" value="ECO:0007669"/>
    <property type="project" value="InterPro"/>
</dbReference>
<dbReference type="GO" id="GO:0006412">
    <property type="term" value="P:translation"/>
    <property type="evidence" value="ECO:0007669"/>
    <property type="project" value="UniProtKB-UniRule"/>
</dbReference>
<dbReference type="CDD" id="cd00427">
    <property type="entry name" value="Ribosomal_L29_HIP"/>
    <property type="match status" value="1"/>
</dbReference>
<dbReference type="FunFam" id="1.10.287.310:FF:000001">
    <property type="entry name" value="50S ribosomal protein L29"/>
    <property type="match status" value="1"/>
</dbReference>
<dbReference type="Gene3D" id="1.10.287.310">
    <property type="match status" value="1"/>
</dbReference>
<dbReference type="HAMAP" id="MF_00374">
    <property type="entry name" value="Ribosomal_uL29"/>
    <property type="match status" value="1"/>
</dbReference>
<dbReference type="InterPro" id="IPR050063">
    <property type="entry name" value="Ribosomal_protein_uL29"/>
</dbReference>
<dbReference type="InterPro" id="IPR001854">
    <property type="entry name" value="Ribosomal_uL29"/>
</dbReference>
<dbReference type="InterPro" id="IPR018254">
    <property type="entry name" value="Ribosomal_uL29_CS"/>
</dbReference>
<dbReference type="InterPro" id="IPR036049">
    <property type="entry name" value="Ribosomal_uL29_sf"/>
</dbReference>
<dbReference type="NCBIfam" id="TIGR00012">
    <property type="entry name" value="L29"/>
    <property type="match status" value="1"/>
</dbReference>
<dbReference type="PANTHER" id="PTHR10916">
    <property type="entry name" value="60S RIBOSOMAL PROTEIN L35/50S RIBOSOMAL PROTEIN L29"/>
    <property type="match status" value="1"/>
</dbReference>
<dbReference type="PANTHER" id="PTHR10916:SF0">
    <property type="entry name" value="LARGE RIBOSOMAL SUBUNIT PROTEIN UL29C"/>
    <property type="match status" value="1"/>
</dbReference>
<dbReference type="Pfam" id="PF00831">
    <property type="entry name" value="Ribosomal_L29"/>
    <property type="match status" value="1"/>
</dbReference>
<dbReference type="SUPFAM" id="SSF46561">
    <property type="entry name" value="Ribosomal protein L29 (L29p)"/>
    <property type="match status" value="1"/>
</dbReference>
<dbReference type="PROSITE" id="PS00579">
    <property type="entry name" value="RIBOSOMAL_L29"/>
    <property type="match status" value="1"/>
</dbReference>
<sequence length="63" mass="7078">MKANELKDKSVEQLNADLLDLLKAQFGLRMQNATGQLGKPSELKRVRRDIARIKTVLTEKGAK</sequence>
<reference key="1">
    <citation type="submission" date="2003-03" db="EMBL/GenBank/DDBJ databases">
        <title>The complete genome sequence of Neisseria gonorrhoeae.</title>
        <authorList>
            <person name="Lewis L.A."/>
            <person name="Gillaspy A.F."/>
            <person name="McLaughlin R.E."/>
            <person name="Gipson M."/>
            <person name="Ducey T.F."/>
            <person name="Ownbey T."/>
            <person name="Hartman K."/>
            <person name="Nydick C."/>
            <person name="Carson M.B."/>
            <person name="Vaughn J."/>
            <person name="Thomson C."/>
            <person name="Song L."/>
            <person name="Lin S."/>
            <person name="Yuan X."/>
            <person name="Najar F."/>
            <person name="Zhan M."/>
            <person name="Ren Q."/>
            <person name="Zhu H."/>
            <person name="Qi S."/>
            <person name="Kenton S.M."/>
            <person name="Lai H."/>
            <person name="White J.D."/>
            <person name="Clifton S."/>
            <person name="Roe B.A."/>
            <person name="Dyer D.W."/>
        </authorList>
    </citation>
    <scope>NUCLEOTIDE SEQUENCE [LARGE SCALE GENOMIC DNA]</scope>
    <source>
        <strain>ATCC 700825 / FA 1090</strain>
    </source>
</reference>
<organism>
    <name type="scientific">Neisseria gonorrhoeae (strain ATCC 700825 / FA 1090)</name>
    <dbReference type="NCBI Taxonomy" id="242231"/>
    <lineage>
        <taxon>Bacteria</taxon>
        <taxon>Pseudomonadati</taxon>
        <taxon>Pseudomonadota</taxon>
        <taxon>Betaproteobacteria</taxon>
        <taxon>Neisseriales</taxon>
        <taxon>Neisseriaceae</taxon>
        <taxon>Neisseria</taxon>
    </lineage>
</organism>
<proteinExistence type="inferred from homology"/>
<gene>
    <name evidence="1" type="primary">rpmC</name>
    <name type="ordered locus">NGO_1831</name>
</gene>
<feature type="chain" id="PRO_0000130425" description="Large ribosomal subunit protein uL29">
    <location>
        <begin position="1"/>
        <end position="63"/>
    </location>
</feature>